<accession>Q2P5B6</accession>
<protein>
    <recommendedName>
        <fullName evidence="1">Large ribosomal subunit protein bL21</fullName>
    </recommendedName>
    <alternativeName>
        <fullName evidence="2">50S ribosomal protein L21</fullName>
    </alternativeName>
</protein>
<sequence>MYAVLVTGGKQYRVAQGETLRVEKLEVEAGNEIKFDTVLMLGDSDGIKLGDALKGASVTAKVVAHGRADKVRIIKFRRRKHHMKRQGHRQHYTEIEITGIAGGDKK</sequence>
<evidence type="ECO:0000255" key="1">
    <source>
        <dbReference type="HAMAP-Rule" id="MF_01363"/>
    </source>
</evidence>
<evidence type="ECO:0000305" key="2"/>
<feature type="chain" id="PRO_0000269432" description="Large ribosomal subunit protein bL21">
    <location>
        <begin position="1"/>
        <end position="106"/>
    </location>
</feature>
<comment type="function">
    <text evidence="1">This protein binds to 23S rRNA in the presence of protein L20.</text>
</comment>
<comment type="subunit">
    <text evidence="1">Part of the 50S ribosomal subunit. Contacts protein L20.</text>
</comment>
<comment type="similarity">
    <text evidence="1">Belongs to the bacterial ribosomal protein bL21 family.</text>
</comment>
<reference key="1">
    <citation type="journal article" date="2005" name="Jpn. Agric. Res. Q.">
        <title>Genome sequence of Xanthomonas oryzae pv. oryzae suggests contribution of large numbers of effector genes and insertion sequences to its race diversity.</title>
        <authorList>
            <person name="Ochiai H."/>
            <person name="Inoue Y."/>
            <person name="Takeya M."/>
            <person name="Sasaki A."/>
            <person name="Kaku H."/>
        </authorList>
    </citation>
    <scope>NUCLEOTIDE SEQUENCE [LARGE SCALE GENOMIC DNA]</scope>
    <source>
        <strain>MAFF 311018</strain>
    </source>
</reference>
<name>RL21_XANOM</name>
<keyword id="KW-0687">Ribonucleoprotein</keyword>
<keyword id="KW-0689">Ribosomal protein</keyword>
<keyword id="KW-0694">RNA-binding</keyword>
<keyword id="KW-0699">rRNA-binding</keyword>
<gene>
    <name evidence="1" type="primary">rplU</name>
    <name type="ordered locus">XOO1506</name>
</gene>
<proteinExistence type="inferred from homology"/>
<dbReference type="EMBL" id="AP008229">
    <property type="protein sequence ID" value="BAE68261.1"/>
    <property type="molecule type" value="Genomic_DNA"/>
</dbReference>
<dbReference type="RefSeq" id="WP_011258394.1">
    <property type="nucleotide sequence ID" value="NC_007705.1"/>
</dbReference>
<dbReference type="SMR" id="Q2P5B6"/>
<dbReference type="KEGG" id="xom:XOO1506"/>
<dbReference type="HOGENOM" id="CLU_061463_3_3_6"/>
<dbReference type="GO" id="GO:0005737">
    <property type="term" value="C:cytoplasm"/>
    <property type="evidence" value="ECO:0007669"/>
    <property type="project" value="UniProtKB-ARBA"/>
</dbReference>
<dbReference type="GO" id="GO:1990904">
    <property type="term" value="C:ribonucleoprotein complex"/>
    <property type="evidence" value="ECO:0007669"/>
    <property type="project" value="UniProtKB-KW"/>
</dbReference>
<dbReference type="GO" id="GO:0005840">
    <property type="term" value="C:ribosome"/>
    <property type="evidence" value="ECO:0007669"/>
    <property type="project" value="UniProtKB-KW"/>
</dbReference>
<dbReference type="GO" id="GO:0019843">
    <property type="term" value="F:rRNA binding"/>
    <property type="evidence" value="ECO:0007669"/>
    <property type="project" value="UniProtKB-UniRule"/>
</dbReference>
<dbReference type="GO" id="GO:0003735">
    <property type="term" value="F:structural constituent of ribosome"/>
    <property type="evidence" value="ECO:0007669"/>
    <property type="project" value="InterPro"/>
</dbReference>
<dbReference type="GO" id="GO:0006412">
    <property type="term" value="P:translation"/>
    <property type="evidence" value="ECO:0007669"/>
    <property type="project" value="UniProtKB-UniRule"/>
</dbReference>
<dbReference type="HAMAP" id="MF_01363">
    <property type="entry name" value="Ribosomal_bL21"/>
    <property type="match status" value="1"/>
</dbReference>
<dbReference type="InterPro" id="IPR028909">
    <property type="entry name" value="bL21-like"/>
</dbReference>
<dbReference type="InterPro" id="IPR036164">
    <property type="entry name" value="bL21-like_sf"/>
</dbReference>
<dbReference type="InterPro" id="IPR001787">
    <property type="entry name" value="Ribosomal_bL21"/>
</dbReference>
<dbReference type="InterPro" id="IPR018258">
    <property type="entry name" value="Ribosomal_bL21_CS"/>
</dbReference>
<dbReference type="NCBIfam" id="TIGR00061">
    <property type="entry name" value="L21"/>
    <property type="match status" value="1"/>
</dbReference>
<dbReference type="PANTHER" id="PTHR21349">
    <property type="entry name" value="50S RIBOSOMAL PROTEIN L21"/>
    <property type="match status" value="1"/>
</dbReference>
<dbReference type="PANTHER" id="PTHR21349:SF0">
    <property type="entry name" value="LARGE RIBOSOMAL SUBUNIT PROTEIN BL21M"/>
    <property type="match status" value="1"/>
</dbReference>
<dbReference type="Pfam" id="PF00829">
    <property type="entry name" value="Ribosomal_L21p"/>
    <property type="match status" value="1"/>
</dbReference>
<dbReference type="SUPFAM" id="SSF141091">
    <property type="entry name" value="L21p-like"/>
    <property type="match status" value="1"/>
</dbReference>
<dbReference type="PROSITE" id="PS01169">
    <property type="entry name" value="RIBOSOMAL_L21"/>
    <property type="match status" value="1"/>
</dbReference>
<organism>
    <name type="scientific">Xanthomonas oryzae pv. oryzae (strain MAFF 311018)</name>
    <dbReference type="NCBI Taxonomy" id="342109"/>
    <lineage>
        <taxon>Bacteria</taxon>
        <taxon>Pseudomonadati</taxon>
        <taxon>Pseudomonadota</taxon>
        <taxon>Gammaproteobacteria</taxon>
        <taxon>Lysobacterales</taxon>
        <taxon>Lysobacteraceae</taxon>
        <taxon>Xanthomonas</taxon>
    </lineage>
</organism>